<feature type="chain" id="PRO_0000231414" description="Deoxyuridine 5'-triphosphate nucleotidohydrolase">
    <location>
        <begin position="1"/>
        <end position="152"/>
    </location>
</feature>
<feature type="binding site" evidence="1">
    <location>
        <begin position="72"/>
        <end position="74"/>
    </location>
    <ligand>
        <name>substrate</name>
    </ligand>
</feature>
<feature type="binding site" evidence="1">
    <location>
        <position position="85"/>
    </location>
    <ligand>
        <name>substrate</name>
    </ligand>
</feature>
<feature type="binding site" evidence="1">
    <location>
        <begin position="89"/>
        <end position="91"/>
    </location>
    <ligand>
        <name>substrate</name>
    </ligand>
</feature>
<reference key="1">
    <citation type="journal article" date="2006" name="Appl. Environ. Microbiol.">
        <title>Genome sequence of the chemolithoautotrophic nitrite-oxidizing bacterium Nitrobacter winogradskyi Nb-255.</title>
        <authorList>
            <person name="Starkenburg S.R."/>
            <person name="Chain P.S.G."/>
            <person name="Sayavedra-Soto L.A."/>
            <person name="Hauser L."/>
            <person name="Land M.L."/>
            <person name="Larimer F.W."/>
            <person name="Malfatti S.A."/>
            <person name="Klotz M.G."/>
            <person name="Bottomley P.J."/>
            <person name="Arp D.J."/>
            <person name="Hickey W.J."/>
        </authorList>
    </citation>
    <scope>NUCLEOTIDE SEQUENCE [LARGE SCALE GENOMIC DNA]</scope>
    <source>
        <strain>ATCC 25391 / DSM 10237 / CIP 104748 / NCIMB 11846 / Nb-255</strain>
    </source>
</reference>
<gene>
    <name evidence="1" type="primary">dut</name>
    <name type="ordered locus">Nwi_0044</name>
</gene>
<dbReference type="EC" id="3.6.1.23" evidence="1"/>
<dbReference type="EMBL" id="CP000115">
    <property type="protein sequence ID" value="ABA03312.1"/>
    <property type="molecule type" value="Genomic_DNA"/>
</dbReference>
<dbReference type="RefSeq" id="WP_011313383.1">
    <property type="nucleotide sequence ID" value="NC_007406.1"/>
</dbReference>
<dbReference type="SMR" id="Q3SWM9"/>
<dbReference type="STRING" id="323098.Nwi_0044"/>
<dbReference type="KEGG" id="nwi:Nwi_0044"/>
<dbReference type="eggNOG" id="COG0756">
    <property type="taxonomic scope" value="Bacteria"/>
</dbReference>
<dbReference type="HOGENOM" id="CLU_068508_1_2_5"/>
<dbReference type="OrthoDB" id="9809956at2"/>
<dbReference type="UniPathway" id="UPA00610">
    <property type="reaction ID" value="UER00666"/>
</dbReference>
<dbReference type="Proteomes" id="UP000002531">
    <property type="component" value="Chromosome"/>
</dbReference>
<dbReference type="GO" id="GO:0004170">
    <property type="term" value="F:dUTP diphosphatase activity"/>
    <property type="evidence" value="ECO:0007669"/>
    <property type="project" value="UniProtKB-UniRule"/>
</dbReference>
<dbReference type="GO" id="GO:0000287">
    <property type="term" value="F:magnesium ion binding"/>
    <property type="evidence" value="ECO:0007669"/>
    <property type="project" value="UniProtKB-UniRule"/>
</dbReference>
<dbReference type="GO" id="GO:0006226">
    <property type="term" value="P:dUMP biosynthetic process"/>
    <property type="evidence" value="ECO:0007669"/>
    <property type="project" value="UniProtKB-UniRule"/>
</dbReference>
<dbReference type="GO" id="GO:0046081">
    <property type="term" value="P:dUTP catabolic process"/>
    <property type="evidence" value="ECO:0007669"/>
    <property type="project" value="InterPro"/>
</dbReference>
<dbReference type="CDD" id="cd07557">
    <property type="entry name" value="trimeric_dUTPase"/>
    <property type="match status" value="1"/>
</dbReference>
<dbReference type="Gene3D" id="2.70.40.10">
    <property type="match status" value="1"/>
</dbReference>
<dbReference type="HAMAP" id="MF_00116">
    <property type="entry name" value="dUTPase_bact"/>
    <property type="match status" value="1"/>
</dbReference>
<dbReference type="InterPro" id="IPR008181">
    <property type="entry name" value="dUTPase"/>
</dbReference>
<dbReference type="InterPro" id="IPR029054">
    <property type="entry name" value="dUTPase-like"/>
</dbReference>
<dbReference type="InterPro" id="IPR036157">
    <property type="entry name" value="dUTPase-like_sf"/>
</dbReference>
<dbReference type="InterPro" id="IPR033704">
    <property type="entry name" value="dUTPase_trimeric"/>
</dbReference>
<dbReference type="NCBIfam" id="TIGR00576">
    <property type="entry name" value="dut"/>
    <property type="match status" value="1"/>
</dbReference>
<dbReference type="NCBIfam" id="NF001862">
    <property type="entry name" value="PRK00601.1"/>
    <property type="match status" value="1"/>
</dbReference>
<dbReference type="PANTHER" id="PTHR11241">
    <property type="entry name" value="DEOXYURIDINE 5'-TRIPHOSPHATE NUCLEOTIDOHYDROLASE"/>
    <property type="match status" value="1"/>
</dbReference>
<dbReference type="PANTHER" id="PTHR11241:SF0">
    <property type="entry name" value="DEOXYURIDINE 5'-TRIPHOSPHATE NUCLEOTIDOHYDROLASE"/>
    <property type="match status" value="1"/>
</dbReference>
<dbReference type="Pfam" id="PF00692">
    <property type="entry name" value="dUTPase"/>
    <property type="match status" value="1"/>
</dbReference>
<dbReference type="SUPFAM" id="SSF51283">
    <property type="entry name" value="dUTPase-like"/>
    <property type="match status" value="1"/>
</dbReference>
<sequence length="152" mass="15826">MSDPIKVDVRQLPHAEGLPLPSYQSTQAAGLDLIAAIGEQAPLVLAAGRRAMVPTGLVIALPDGYEAQVRPRSGLAARHGVTVLNSPGTVDADYRGEINVLLVNLGSEAFTIRRGERIAQMIVAPVTRVELVRAAALPATPRGSGGFGSTGR</sequence>
<evidence type="ECO:0000255" key="1">
    <source>
        <dbReference type="HAMAP-Rule" id="MF_00116"/>
    </source>
</evidence>
<protein>
    <recommendedName>
        <fullName evidence="1">Deoxyuridine 5'-triphosphate nucleotidohydrolase</fullName>
        <shortName evidence="1">dUTPase</shortName>
        <ecNumber evidence="1">3.6.1.23</ecNumber>
    </recommendedName>
    <alternativeName>
        <fullName evidence="1">dUTP pyrophosphatase</fullName>
    </alternativeName>
</protein>
<accession>Q3SWM9</accession>
<name>DUT_NITWN</name>
<comment type="function">
    <text evidence="1">This enzyme is involved in nucleotide metabolism: it produces dUMP, the immediate precursor of thymidine nucleotides and it decreases the intracellular concentration of dUTP so that uracil cannot be incorporated into DNA.</text>
</comment>
<comment type="catalytic activity">
    <reaction evidence="1">
        <text>dUTP + H2O = dUMP + diphosphate + H(+)</text>
        <dbReference type="Rhea" id="RHEA:10248"/>
        <dbReference type="ChEBI" id="CHEBI:15377"/>
        <dbReference type="ChEBI" id="CHEBI:15378"/>
        <dbReference type="ChEBI" id="CHEBI:33019"/>
        <dbReference type="ChEBI" id="CHEBI:61555"/>
        <dbReference type="ChEBI" id="CHEBI:246422"/>
        <dbReference type="EC" id="3.6.1.23"/>
    </reaction>
</comment>
<comment type="cofactor">
    <cofactor evidence="1">
        <name>Mg(2+)</name>
        <dbReference type="ChEBI" id="CHEBI:18420"/>
    </cofactor>
</comment>
<comment type="pathway">
    <text evidence="1">Pyrimidine metabolism; dUMP biosynthesis; dUMP from dCTP (dUTP route): step 2/2.</text>
</comment>
<comment type="similarity">
    <text evidence="1">Belongs to the dUTPase family.</text>
</comment>
<organism>
    <name type="scientific">Nitrobacter winogradskyi (strain ATCC 25391 / DSM 10237 / CIP 104748 / NCIMB 11846 / Nb-255)</name>
    <dbReference type="NCBI Taxonomy" id="323098"/>
    <lineage>
        <taxon>Bacteria</taxon>
        <taxon>Pseudomonadati</taxon>
        <taxon>Pseudomonadota</taxon>
        <taxon>Alphaproteobacteria</taxon>
        <taxon>Hyphomicrobiales</taxon>
        <taxon>Nitrobacteraceae</taxon>
        <taxon>Nitrobacter</taxon>
    </lineage>
</organism>
<keyword id="KW-0378">Hydrolase</keyword>
<keyword id="KW-0460">Magnesium</keyword>
<keyword id="KW-0479">Metal-binding</keyword>
<keyword id="KW-0546">Nucleotide metabolism</keyword>
<keyword id="KW-1185">Reference proteome</keyword>
<proteinExistence type="inferred from homology"/>